<proteinExistence type="inferred from homology"/>
<name>CSN11_CANGA</name>
<dbReference type="EMBL" id="CR380959">
    <property type="protein sequence ID" value="CAG62877.1"/>
    <property type="molecule type" value="Genomic_DNA"/>
</dbReference>
<dbReference type="RefSeq" id="XP_449897.1">
    <property type="nucleotide sequence ID" value="XM_449897.1"/>
</dbReference>
<dbReference type="FunCoup" id="Q6FIP7">
    <property type="interactions" value="84"/>
</dbReference>
<dbReference type="STRING" id="284593.Q6FIP7"/>
<dbReference type="EnsemblFungi" id="CAGL0M12749g-T">
    <property type="protein sequence ID" value="CAGL0M12749g-T-p1"/>
    <property type="gene ID" value="CAGL0M12749g"/>
</dbReference>
<dbReference type="KEGG" id="cgr:2891448"/>
<dbReference type="CGD" id="CAL0136823">
    <property type="gene designation" value="CAGL0M12749g"/>
</dbReference>
<dbReference type="VEuPathDB" id="FungiDB:CAGL0M12749g"/>
<dbReference type="eggNOG" id="ENOG502RK42">
    <property type="taxonomic scope" value="Eukaryota"/>
</dbReference>
<dbReference type="HOGENOM" id="CLU_051217_0_0_1"/>
<dbReference type="InParanoid" id="Q6FIP7"/>
<dbReference type="OMA" id="WNTEINE"/>
<dbReference type="Proteomes" id="UP000002428">
    <property type="component" value="Chromosome M"/>
</dbReference>
<dbReference type="GO" id="GO:0008180">
    <property type="term" value="C:COP9 signalosome"/>
    <property type="evidence" value="ECO:0007669"/>
    <property type="project" value="UniProtKB-KW"/>
</dbReference>
<dbReference type="GO" id="GO:0005737">
    <property type="term" value="C:cytoplasm"/>
    <property type="evidence" value="ECO:0007669"/>
    <property type="project" value="UniProtKB-SubCell"/>
</dbReference>
<dbReference type="InterPro" id="IPR000717">
    <property type="entry name" value="PCI_dom"/>
</dbReference>
<dbReference type="PROSITE" id="PS50250">
    <property type="entry name" value="PCI"/>
    <property type="match status" value="1"/>
</dbReference>
<protein>
    <recommendedName>
        <fullName>COP9 signalosome complex subunit 11</fullName>
    </recommendedName>
</protein>
<gene>
    <name type="primary">PCI8</name>
    <name type="synonym">CSN11</name>
    <name type="ordered locus">CAGL0M12749g</name>
</gene>
<feature type="chain" id="PRO_0000121026" description="COP9 signalosome complex subunit 11">
    <location>
        <begin position="1"/>
        <end position="452"/>
    </location>
</feature>
<feature type="domain" description="PCI" evidence="2">
    <location>
        <begin position="205"/>
        <end position="374"/>
    </location>
</feature>
<comment type="function">
    <text evidence="1">Component of the COP9 signalosome (CSN) complex that acts as an regulator of the ubiquitin (Ubl) conjugation pathway by mediating the deneddylation of the cullin subunit of SCF-type E3 ubiquitin-protein ligase complexes The CSN complex is involved in the regulation of the mating pheromone response. PCI8 may also be involved in transcriptional and translational control (By similarity).</text>
</comment>
<comment type="subunit">
    <text evidence="1">Component of a COP9 signalosome-like (CSN) complex.</text>
</comment>
<comment type="subcellular location">
    <subcellularLocation>
        <location evidence="3">Cytoplasm</location>
    </subcellularLocation>
    <subcellularLocation>
        <location evidence="3">Nucleus</location>
    </subcellularLocation>
</comment>
<accession>Q6FIP7</accession>
<evidence type="ECO:0000250" key="1"/>
<evidence type="ECO:0000255" key="2">
    <source>
        <dbReference type="PROSITE-ProRule" id="PRU01185"/>
    </source>
</evidence>
<evidence type="ECO:0000305" key="3"/>
<organism>
    <name type="scientific">Candida glabrata (strain ATCC 2001 / BCRC 20586 / JCM 3761 / NBRC 0622 / NRRL Y-65 / CBS 138)</name>
    <name type="common">Yeast</name>
    <name type="synonym">Nakaseomyces glabratus</name>
    <dbReference type="NCBI Taxonomy" id="284593"/>
    <lineage>
        <taxon>Eukaryota</taxon>
        <taxon>Fungi</taxon>
        <taxon>Dikarya</taxon>
        <taxon>Ascomycota</taxon>
        <taxon>Saccharomycotina</taxon>
        <taxon>Saccharomycetes</taxon>
        <taxon>Saccharomycetales</taxon>
        <taxon>Saccharomycetaceae</taxon>
        <taxon>Nakaseomyces</taxon>
    </lineage>
</organism>
<reference key="1">
    <citation type="journal article" date="2004" name="Nature">
        <title>Genome evolution in yeasts.</title>
        <authorList>
            <person name="Dujon B."/>
            <person name="Sherman D."/>
            <person name="Fischer G."/>
            <person name="Durrens P."/>
            <person name="Casaregola S."/>
            <person name="Lafontaine I."/>
            <person name="de Montigny J."/>
            <person name="Marck C."/>
            <person name="Neuveglise C."/>
            <person name="Talla E."/>
            <person name="Goffard N."/>
            <person name="Frangeul L."/>
            <person name="Aigle M."/>
            <person name="Anthouard V."/>
            <person name="Babour A."/>
            <person name="Barbe V."/>
            <person name="Barnay S."/>
            <person name="Blanchin S."/>
            <person name="Beckerich J.-M."/>
            <person name="Beyne E."/>
            <person name="Bleykasten C."/>
            <person name="Boisrame A."/>
            <person name="Boyer J."/>
            <person name="Cattolico L."/>
            <person name="Confanioleri F."/>
            <person name="de Daruvar A."/>
            <person name="Despons L."/>
            <person name="Fabre E."/>
            <person name="Fairhead C."/>
            <person name="Ferry-Dumazet H."/>
            <person name="Groppi A."/>
            <person name="Hantraye F."/>
            <person name="Hennequin C."/>
            <person name="Jauniaux N."/>
            <person name="Joyet P."/>
            <person name="Kachouri R."/>
            <person name="Kerrest A."/>
            <person name="Koszul R."/>
            <person name="Lemaire M."/>
            <person name="Lesur I."/>
            <person name="Ma L."/>
            <person name="Muller H."/>
            <person name="Nicaud J.-M."/>
            <person name="Nikolski M."/>
            <person name="Oztas S."/>
            <person name="Ozier-Kalogeropoulos O."/>
            <person name="Pellenz S."/>
            <person name="Potier S."/>
            <person name="Richard G.-F."/>
            <person name="Straub M.-L."/>
            <person name="Suleau A."/>
            <person name="Swennen D."/>
            <person name="Tekaia F."/>
            <person name="Wesolowski-Louvel M."/>
            <person name="Westhof E."/>
            <person name="Wirth B."/>
            <person name="Zeniou-Meyer M."/>
            <person name="Zivanovic Y."/>
            <person name="Bolotin-Fukuhara M."/>
            <person name="Thierry A."/>
            <person name="Bouchier C."/>
            <person name="Caudron B."/>
            <person name="Scarpelli C."/>
            <person name="Gaillardin C."/>
            <person name="Weissenbach J."/>
            <person name="Wincker P."/>
            <person name="Souciet J.-L."/>
        </authorList>
    </citation>
    <scope>NUCLEOTIDE SEQUENCE [LARGE SCALE GENOMIC DNA]</scope>
    <source>
        <strain>ATCC 2001 / BCRC 20586 / JCM 3761 / NBRC 0622 / NRRL Y-65 / CBS 138</strain>
    </source>
</reference>
<keyword id="KW-0963">Cytoplasm</keyword>
<keyword id="KW-0539">Nucleus</keyword>
<keyword id="KW-1185">Reference proteome</keyword>
<keyword id="KW-0736">Signalosome</keyword>
<sequence>MLSQLRQYHPVIELETVAHLLKSEYGDEQERAQLGQLGLQIVNRYDGYECPYKALFEAAVSDSKATISHAAGLHYSSANDESHTNDTDNEHRDDNVMKHLLSGKYLEALALLDANSKMDKSPFKHMEQFAKIMIFSRNYENVQELELRLQYSLSDDRIDQISKDQQPSQNLSDEKESICRIKLYICTSYFIEGRYFECSSKFYKFYIEDPKTMMKILTSKVDGDALLLLPELKTMIAASTLVSIPMNSYDELISIDELTELFDTVDILSRSLKLLINTSFKCFLALWNNEFQKTLSRCYLLNKSWETAERLMKMKIYCFYLKLSKTLTISYLSEKLGIEYDEVKESVERLICSANLYFHLDGDVISYSKRSIVDSTVRTLDENCRHINELLDKQRVRNDKLKEMISGNLLEEEQTIRKSDTAKTSNNQEIMDIDDVQFLSDDLEQVDSCISD</sequence>